<feature type="chain" id="PRO_0000125159" description="Large ribosomal subunit protein uL22">
    <location>
        <begin position="1"/>
        <end position="116"/>
    </location>
</feature>
<name>RL22_GLOVI</name>
<dbReference type="EMBL" id="BA000045">
    <property type="protein sequence ID" value="BAC91863.1"/>
    <property type="molecule type" value="Genomic_DNA"/>
</dbReference>
<dbReference type="RefSeq" id="NP_926868.1">
    <property type="nucleotide sequence ID" value="NC_005125.1"/>
</dbReference>
<dbReference type="RefSeq" id="WP_011143910.1">
    <property type="nucleotide sequence ID" value="NC_005125.1"/>
</dbReference>
<dbReference type="SMR" id="Q7NEF7"/>
<dbReference type="FunCoup" id="Q7NEF7">
    <property type="interactions" value="137"/>
</dbReference>
<dbReference type="STRING" id="251221.gene:10761439"/>
<dbReference type="EnsemblBacteria" id="BAC91863">
    <property type="protein sequence ID" value="BAC91863"/>
    <property type="gene ID" value="BAC91863"/>
</dbReference>
<dbReference type="KEGG" id="gvi:gll3922"/>
<dbReference type="PATRIC" id="fig|251221.4.peg.3955"/>
<dbReference type="eggNOG" id="COG0091">
    <property type="taxonomic scope" value="Bacteria"/>
</dbReference>
<dbReference type="HOGENOM" id="CLU_083987_3_3_3"/>
<dbReference type="InParanoid" id="Q7NEF7"/>
<dbReference type="OrthoDB" id="9805969at2"/>
<dbReference type="PhylomeDB" id="Q7NEF7"/>
<dbReference type="Proteomes" id="UP000000557">
    <property type="component" value="Chromosome"/>
</dbReference>
<dbReference type="GO" id="GO:0022625">
    <property type="term" value="C:cytosolic large ribosomal subunit"/>
    <property type="evidence" value="ECO:0000318"/>
    <property type="project" value="GO_Central"/>
</dbReference>
<dbReference type="GO" id="GO:0019843">
    <property type="term" value="F:rRNA binding"/>
    <property type="evidence" value="ECO:0007669"/>
    <property type="project" value="UniProtKB-UniRule"/>
</dbReference>
<dbReference type="GO" id="GO:0003735">
    <property type="term" value="F:structural constituent of ribosome"/>
    <property type="evidence" value="ECO:0000318"/>
    <property type="project" value="GO_Central"/>
</dbReference>
<dbReference type="GO" id="GO:0006412">
    <property type="term" value="P:translation"/>
    <property type="evidence" value="ECO:0000318"/>
    <property type="project" value="GO_Central"/>
</dbReference>
<dbReference type="CDD" id="cd00336">
    <property type="entry name" value="Ribosomal_L22"/>
    <property type="match status" value="1"/>
</dbReference>
<dbReference type="Gene3D" id="3.90.470.10">
    <property type="entry name" value="Ribosomal protein L22/L17"/>
    <property type="match status" value="1"/>
</dbReference>
<dbReference type="HAMAP" id="MF_01331_B">
    <property type="entry name" value="Ribosomal_uL22_B"/>
    <property type="match status" value="1"/>
</dbReference>
<dbReference type="InterPro" id="IPR001063">
    <property type="entry name" value="Ribosomal_uL22"/>
</dbReference>
<dbReference type="InterPro" id="IPR005727">
    <property type="entry name" value="Ribosomal_uL22_bac/chlpt-type"/>
</dbReference>
<dbReference type="InterPro" id="IPR047867">
    <property type="entry name" value="Ribosomal_uL22_bac/org-type"/>
</dbReference>
<dbReference type="InterPro" id="IPR036394">
    <property type="entry name" value="Ribosomal_uL22_sf"/>
</dbReference>
<dbReference type="NCBIfam" id="TIGR01044">
    <property type="entry name" value="rplV_bact"/>
    <property type="match status" value="1"/>
</dbReference>
<dbReference type="PANTHER" id="PTHR13501">
    <property type="entry name" value="CHLOROPLAST 50S RIBOSOMAL PROTEIN L22-RELATED"/>
    <property type="match status" value="1"/>
</dbReference>
<dbReference type="PANTHER" id="PTHR13501:SF8">
    <property type="entry name" value="LARGE RIBOSOMAL SUBUNIT PROTEIN UL22M"/>
    <property type="match status" value="1"/>
</dbReference>
<dbReference type="Pfam" id="PF00237">
    <property type="entry name" value="Ribosomal_L22"/>
    <property type="match status" value="1"/>
</dbReference>
<dbReference type="SUPFAM" id="SSF54843">
    <property type="entry name" value="Ribosomal protein L22"/>
    <property type="match status" value="1"/>
</dbReference>
<protein>
    <recommendedName>
        <fullName evidence="1">Large ribosomal subunit protein uL22</fullName>
    </recommendedName>
    <alternativeName>
        <fullName evidence="2">50S ribosomal protein L22</fullName>
    </alternativeName>
</protein>
<keyword id="KW-1185">Reference proteome</keyword>
<keyword id="KW-0687">Ribonucleoprotein</keyword>
<keyword id="KW-0689">Ribosomal protein</keyword>
<keyword id="KW-0694">RNA-binding</keyword>
<keyword id="KW-0699">rRNA-binding</keyword>
<proteinExistence type="inferred from homology"/>
<sequence length="116" mass="13000">MADEVKAVARFIRMSPFKVRRILDQIRGRSYQDALIILQFMPHAATEPIKKVLESAAANAEHNFSLDRRALVVSTAFADGGPVLKRFRAGDRGRARPVRKRTSHITVAVRSTSEVE</sequence>
<reference key="1">
    <citation type="journal article" date="2003" name="DNA Res.">
        <title>Complete genome structure of Gloeobacter violaceus PCC 7421, a cyanobacterium that lacks thylakoids.</title>
        <authorList>
            <person name="Nakamura Y."/>
            <person name="Kaneko T."/>
            <person name="Sato S."/>
            <person name="Mimuro M."/>
            <person name="Miyashita H."/>
            <person name="Tsuchiya T."/>
            <person name="Sasamoto S."/>
            <person name="Watanabe A."/>
            <person name="Kawashima K."/>
            <person name="Kishida Y."/>
            <person name="Kiyokawa C."/>
            <person name="Kohara M."/>
            <person name="Matsumoto M."/>
            <person name="Matsuno A."/>
            <person name="Nakazaki N."/>
            <person name="Shimpo S."/>
            <person name="Takeuchi C."/>
            <person name="Yamada M."/>
            <person name="Tabata S."/>
        </authorList>
    </citation>
    <scope>NUCLEOTIDE SEQUENCE [LARGE SCALE GENOMIC DNA]</scope>
    <source>
        <strain>ATCC 29082 / PCC 7421</strain>
    </source>
</reference>
<organism>
    <name type="scientific">Gloeobacter violaceus (strain ATCC 29082 / PCC 7421)</name>
    <dbReference type="NCBI Taxonomy" id="251221"/>
    <lineage>
        <taxon>Bacteria</taxon>
        <taxon>Bacillati</taxon>
        <taxon>Cyanobacteriota</taxon>
        <taxon>Cyanophyceae</taxon>
        <taxon>Gloeobacterales</taxon>
        <taxon>Gloeobacteraceae</taxon>
        <taxon>Gloeobacter</taxon>
    </lineage>
</organism>
<evidence type="ECO:0000255" key="1">
    <source>
        <dbReference type="HAMAP-Rule" id="MF_01331"/>
    </source>
</evidence>
<evidence type="ECO:0000305" key="2"/>
<gene>
    <name evidence="1" type="primary">rplV</name>
    <name evidence="1" type="synonym">rpl22</name>
    <name type="ordered locus">gll3922</name>
</gene>
<comment type="function">
    <text evidence="1">This protein binds specifically to 23S rRNA; its binding is stimulated by other ribosomal proteins, e.g. L4, L17, and L20. It is important during the early stages of 50S assembly. It makes multiple contacts with different domains of the 23S rRNA in the assembled 50S subunit and ribosome (By similarity).</text>
</comment>
<comment type="function">
    <text evidence="1">The globular domain of the protein is located near the polypeptide exit tunnel on the outside of the subunit, while an extended beta-hairpin is found that lines the wall of the exit tunnel in the center of the 70S ribosome.</text>
</comment>
<comment type="subunit">
    <text evidence="1">Part of the 50S ribosomal subunit.</text>
</comment>
<comment type="similarity">
    <text evidence="1">Belongs to the universal ribosomal protein uL22 family.</text>
</comment>
<accession>Q7NEF7</accession>